<comment type="similarity">
    <text evidence="2">To M.tuberculosis Rv0498 and S.coelicolor SCO3347.</text>
</comment>
<comment type="sequence caution" evidence="2">
    <conflict type="erroneous initiation">
        <sequence resource="EMBL-CDS" id="AAA17232"/>
    </conflict>
</comment>
<organism>
    <name type="scientific">Mycobacterium leprae (strain TN)</name>
    <dbReference type="NCBI Taxonomy" id="272631"/>
    <lineage>
        <taxon>Bacteria</taxon>
        <taxon>Bacillati</taxon>
        <taxon>Actinomycetota</taxon>
        <taxon>Actinomycetes</taxon>
        <taxon>Mycobacteriales</taxon>
        <taxon>Mycobacteriaceae</taxon>
        <taxon>Mycobacterium</taxon>
    </lineage>
</organism>
<sequence length="280" mass="30460">MRPVIKVGLSTASVYPLRAEAAFEYAAKLGYDGVELMVWGESVSQDIDAVKGLSRRYRVPVLSVHAPCLLISQRVWGANPVPKLERSVRAAEQLGAQTVVVHPPFRWQRRYAEGFSDQVAELEAASDVMIAVENMFPFRADRFFGADQSRERMRKRGGGPGPAISVFAPSFDPLAGNHAHYTLDLSHTATAGSDSLEMVRRMGSGLVHLHLCDGSGLPADEHLVPGRGTQPTAAVCQLLAGADFAGHVVLEVSTSSVRSATERETMLTESLQFARTYLLR</sequence>
<dbReference type="EMBL" id="U00018">
    <property type="protein sequence ID" value="AAA17232.1"/>
    <property type="status" value="ALT_INIT"/>
    <property type="molecule type" value="Genomic_DNA"/>
</dbReference>
<dbReference type="EMBL" id="AL583925">
    <property type="protein sequence ID" value="CAC31949.1"/>
    <property type="molecule type" value="Genomic_DNA"/>
</dbReference>
<dbReference type="PIR" id="E87213">
    <property type="entry name" value="E87213"/>
</dbReference>
<dbReference type="PIR" id="S72896">
    <property type="entry name" value="S72896"/>
</dbReference>
<dbReference type="RefSeq" id="NP_302576.1">
    <property type="nucleotide sequence ID" value="NC_002677.1"/>
</dbReference>
<dbReference type="RefSeq" id="WP_010908895.1">
    <property type="nucleotide sequence ID" value="NC_002677.1"/>
</dbReference>
<dbReference type="SMR" id="P54581"/>
<dbReference type="STRING" id="272631.gene:17576295"/>
<dbReference type="KEGG" id="mle:ML2432"/>
<dbReference type="PATRIC" id="fig|272631.5.peg.4672"/>
<dbReference type="Leproma" id="ML2432"/>
<dbReference type="eggNOG" id="COG1082">
    <property type="taxonomic scope" value="Bacteria"/>
</dbReference>
<dbReference type="HOGENOM" id="CLU_065571_0_0_11"/>
<dbReference type="OrthoDB" id="3248123at2"/>
<dbReference type="Proteomes" id="UP000000806">
    <property type="component" value="Chromosome"/>
</dbReference>
<dbReference type="Gene3D" id="3.20.20.150">
    <property type="entry name" value="Divalent-metal-dependent TIM barrel enzymes"/>
    <property type="match status" value="1"/>
</dbReference>
<dbReference type="InterPro" id="IPR050312">
    <property type="entry name" value="IolE/XylAMocC-like"/>
</dbReference>
<dbReference type="InterPro" id="IPR036237">
    <property type="entry name" value="Xyl_isomerase-like_sf"/>
</dbReference>
<dbReference type="InterPro" id="IPR013022">
    <property type="entry name" value="Xyl_isomerase-like_TIM-brl"/>
</dbReference>
<dbReference type="PANTHER" id="PTHR12110:SF47">
    <property type="match status" value="1"/>
</dbReference>
<dbReference type="PANTHER" id="PTHR12110">
    <property type="entry name" value="HYDROXYPYRUVATE ISOMERASE"/>
    <property type="match status" value="1"/>
</dbReference>
<dbReference type="Pfam" id="PF01261">
    <property type="entry name" value="AP_endonuc_2"/>
    <property type="match status" value="1"/>
</dbReference>
<dbReference type="SUPFAM" id="SSF51658">
    <property type="entry name" value="Xylose isomerase-like"/>
    <property type="match status" value="1"/>
</dbReference>
<name>Y2432_MYCLE</name>
<protein>
    <recommendedName>
        <fullName>Uncharacterized protein ML2432</fullName>
    </recommendedName>
</protein>
<keyword id="KW-1185">Reference proteome</keyword>
<keyword id="KW-0732">Signal</keyword>
<feature type="signal peptide" evidence="1">
    <location>
        <begin position="1"/>
        <end position="21"/>
    </location>
</feature>
<feature type="chain" id="PRO_0000014078" description="Uncharacterized protein ML2432">
    <location>
        <begin position="22"/>
        <end position="280"/>
    </location>
</feature>
<gene>
    <name type="ordered locus">ML2432</name>
    <name type="ORF">B2168_C2_210</name>
</gene>
<accession>P54581</accession>
<accession>Q9CB55</accession>
<proteinExistence type="inferred from homology"/>
<evidence type="ECO:0000255" key="1"/>
<evidence type="ECO:0000305" key="2"/>
<reference key="1">
    <citation type="submission" date="1994-03" db="EMBL/GenBank/DDBJ databases">
        <authorList>
            <person name="Smith D.R."/>
            <person name="Robison K."/>
        </authorList>
    </citation>
    <scope>NUCLEOTIDE SEQUENCE [GENOMIC DNA]</scope>
</reference>
<reference key="2">
    <citation type="journal article" date="2001" name="Nature">
        <title>Massive gene decay in the leprosy bacillus.</title>
        <authorList>
            <person name="Cole S.T."/>
            <person name="Eiglmeier K."/>
            <person name="Parkhill J."/>
            <person name="James K.D."/>
            <person name="Thomson N.R."/>
            <person name="Wheeler P.R."/>
            <person name="Honore N."/>
            <person name="Garnier T."/>
            <person name="Churcher C.M."/>
            <person name="Harris D.E."/>
            <person name="Mungall K.L."/>
            <person name="Basham D."/>
            <person name="Brown D."/>
            <person name="Chillingworth T."/>
            <person name="Connor R."/>
            <person name="Davies R.M."/>
            <person name="Devlin K."/>
            <person name="Duthoy S."/>
            <person name="Feltwell T."/>
            <person name="Fraser A."/>
            <person name="Hamlin N."/>
            <person name="Holroyd S."/>
            <person name="Hornsby T."/>
            <person name="Jagels K."/>
            <person name="Lacroix C."/>
            <person name="Maclean J."/>
            <person name="Moule S."/>
            <person name="Murphy L.D."/>
            <person name="Oliver K."/>
            <person name="Quail M.A."/>
            <person name="Rajandream M.A."/>
            <person name="Rutherford K.M."/>
            <person name="Rutter S."/>
            <person name="Seeger K."/>
            <person name="Simon S."/>
            <person name="Simmonds M."/>
            <person name="Skelton J."/>
            <person name="Squares R."/>
            <person name="Squares S."/>
            <person name="Stevens K."/>
            <person name="Taylor K."/>
            <person name="Whitehead S."/>
            <person name="Woodward J.R."/>
            <person name="Barrell B.G."/>
        </authorList>
    </citation>
    <scope>NUCLEOTIDE SEQUENCE [LARGE SCALE GENOMIC DNA]</scope>
    <source>
        <strain>TN</strain>
    </source>
</reference>